<comment type="function">
    <text evidence="1">The RuvA-RuvB-RuvC complex processes Holliday junction (HJ) DNA during genetic recombination and DNA repair. Endonuclease that resolves HJ intermediates. Cleaves cruciform DNA by making single-stranded nicks across the HJ at symmetrical positions within the homologous arms, yielding a 5'-phosphate and a 3'-hydroxyl group; requires a central core of homology in the junction. The consensus cleavage sequence is 5'-(A/T)TT(C/G)-3'. Cleavage occurs on the 3'-side of the TT dinucleotide at the point of strand exchange. HJ branch migration catalyzed by RuvA-RuvB allows RuvC to scan DNA until it finds its consensus sequence, where it cleaves and resolves the cruciform DNA.</text>
</comment>
<comment type="catalytic activity">
    <reaction evidence="1">
        <text>Endonucleolytic cleavage at a junction such as a reciprocal single-stranded crossover between two homologous DNA duplexes (Holliday junction).</text>
        <dbReference type="EC" id="3.1.21.10"/>
    </reaction>
</comment>
<comment type="cofactor">
    <cofactor evidence="1">
        <name>Mg(2+)</name>
        <dbReference type="ChEBI" id="CHEBI:18420"/>
    </cofactor>
    <text evidence="1">Binds 2 Mg(2+) ion per subunit.</text>
</comment>
<comment type="subunit">
    <text evidence="1">Homodimer which binds Holliday junction (HJ) DNA. The HJ becomes 2-fold symmetrical on binding to RuvC with unstacked arms; it has a different conformation from HJ DNA in complex with RuvA. In the full resolvosome a probable DNA-RuvA(4)-RuvB(12)-RuvC(2) complex forms which resolves the HJ.</text>
</comment>
<comment type="subcellular location">
    <subcellularLocation>
        <location evidence="1">Cytoplasm</location>
    </subcellularLocation>
</comment>
<comment type="similarity">
    <text evidence="1">Belongs to the RuvC family.</text>
</comment>
<protein>
    <recommendedName>
        <fullName evidence="1">Crossover junction endodeoxyribonuclease RuvC</fullName>
        <ecNumber evidence="1">3.1.21.10</ecNumber>
    </recommendedName>
    <alternativeName>
        <fullName evidence="1">Holliday junction nuclease RuvC</fullName>
    </alternativeName>
    <alternativeName>
        <fullName evidence="1">Holliday junction resolvase RuvC</fullName>
    </alternativeName>
</protein>
<keyword id="KW-0963">Cytoplasm</keyword>
<keyword id="KW-0227">DNA damage</keyword>
<keyword id="KW-0233">DNA recombination</keyword>
<keyword id="KW-0234">DNA repair</keyword>
<keyword id="KW-0238">DNA-binding</keyword>
<keyword id="KW-0255">Endonuclease</keyword>
<keyword id="KW-0378">Hydrolase</keyword>
<keyword id="KW-0460">Magnesium</keyword>
<keyword id="KW-0479">Metal-binding</keyword>
<keyword id="KW-0540">Nuclease</keyword>
<keyword id="KW-1185">Reference proteome</keyword>
<gene>
    <name evidence="1" type="primary">ruvC</name>
    <name type="ordered locus">Abu_2335</name>
</gene>
<accession>A8EX70</accession>
<name>RUVC_ALIB4</name>
<organism>
    <name type="scientific">Aliarcobacter butzleri (strain RM4018)</name>
    <name type="common">Arcobacter butzleri</name>
    <dbReference type="NCBI Taxonomy" id="367737"/>
    <lineage>
        <taxon>Bacteria</taxon>
        <taxon>Pseudomonadati</taxon>
        <taxon>Campylobacterota</taxon>
        <taxon>Epsilonproteobacteria</taxon>
        <taxon>Campylobacterales</taxon>
        <taxon>Arcobacteraceae</taxon>
        <taxon>Aliarcobacter</taxon>
    </lineage>
</organism>
<feature type="chain" id="PRO_1000057262" description="Crossover junction endodeoxyribonuclease RuvC">
    <location>
        <begin position="1"/>
        <end position="154"/>
    </location>
</feature>
<feature type="active site" evidence="1">
    <location>
        <position position="7"/>
    </location>
</feature>
<feature type="active site" evidence="1">
    <location>
        <position position="66"/>
    </location>
</feature>
<feature type="active site" evidence="1">
    <location>
        <position position="139"/>
    </location>
</feature>
<feature type="binding site" evidence="1">
    <location>
        <position position="7"/>
    </location>
    <ligand>
        <name>Mg(2+)</name>
        <dbReference type="ChEBI" id="CHEBI:18420"/>
        <label>1</label>
    </ligand>
</feature>
<feature type="binding site" evidence="1">
    <location>
        <position position="66"/>
    </location>
    <ligand>
        <name>Mg(2+)</name>
        <dbReference type="ChEBI" id="CHEBI:18420"/>
        <label>2</label>
    </ligand>
</feature>
<feature type="binding site" evidence="1">
    <location>
        <position position="139"/>
    </location>
    <ligand>
        <name>Mg(2+)</name>
        <dbReference type="ChEBI" id="CHEBI:18420"/>
        <label>1</label>
    </ligand>
</feature>
<reference key="1">
    <citation type="journal article" date="2007" name="PLoS ONE">
        <title>The complete genome sequence and analysis of the Epsilonproteobacterium Arcobacter butzleri.</title>
        <authorList>
            <person name="Miller W.G."/>
            <person name="Parker C.T."/>
            <person name="Rubenfield M."/>
            <person name="Mendz G.L."/>
            <person name="Woesten M.M.S.M."/>
            <person name="Ussery D.W."/>
            <person name="Stolz J.F."/>
            <person name="Binnewies T.T."/>
            <person name="Hallin P.F."/>
            <person name="Wang G."/>
            <person name="Malek J.A."/>
            <person name="Rogosin A."/>
            <person name="Stanker L.H."/>
            <person name="Mandrell R.E."/>
        </authorList>
    </citation>
    <scope>NUCLEOTIDE SEQUENCE [LARGE SCALE GENOMIC DNA]</scope>
    <source>
        <strain>RM4018</strain>
    </source>
</reference>
<dbReference type="EC" id="3.1.21.10" evidence="1"/>
<dbReference type="EMBL" id="CP000361">
    <property type="protein sequence ID" value="ABV68543.1"/>
    <property type="molecule type" value="Genomic_DNA"/>
</dbReference>
<dbReference type="RefSeq" id="WP_004510037.1">
    <property type="nucleotide sequence ID" value="NC_009850.1"/>
</dbReference>
<dbReference type="SMR" id="A8EX70"/>
<dbReference type="STRING" id="367737.Abu_2335"/>
<dbReference type="GeneID" id="24303464"/>
<dbReference type="KEGG" id="abu:Abu_2335"/>
<dbReference type="eggNOG" id="COG0817">
    <property type="taxonomic scope" value="Bacteria"/>
</dbReference>
<dbReference type="HOGENOM" id="CLU_091257_3_0_7"/>
<dbReference type="Proteomes" id="UP000001136">
    <property type="component" value="Chromosome"/>
</dbReference>
<dbReference type="GO" id="GO:0005737">
    <property type="term" value="C:cytoplasm"/>
    <property type="evidence" value="ECO:0007669"/>
    <property type="project" value="UniProtKB-SubCell"/>
</dbReference>
<dbReference type="GO" id="GO:0048476">
    <property type="term" value="C:Holliday junction resolvase complex"/>
    <property type="evidence" value="ECO:0007669"/>
    <property type="project" value="UniProtKB-UniRule"/>
</dbReference>
<dbReference type="GO" id="GO:0008821">
    <property type="term" value="F:crossover junction DNA endonuclease activity"/>
    <property type="evidence" value="ECO:0007669"/>
    <property type="project" value="UniProtKB-UniRule"/>
</dbReference>
<dbReference type="GO" id="GO:0003677">
    <property type="term" value="F:DNA binding"/>
    <property type="evidence" value="ECO:0007669"/>
    <property type="project" value="UniProtKB-KW"/>
</dbReference>
<dbReference type="GO" id="GO:0000287">
    <property type="term" value="F:magnesium ion binding"/>
    <property type="evidence" value="ECO:0007669"/>
    <property type="project" value="UniProtKB-UniRule"/>
</dbReference>
<dbReference type="GO" id="GO:0006310">
    <property type="term" value="P:DNA recombination"/>
    <property type="evidence" value="ECO:0007669"/>
    <property type="project" value="UniProtKB-UniRule"/>
</dbReference>
<dbReference type="GO" id="GO:0006281">
    <property type="term" value="P:DNA repair"/>
    <property type="evidence" value="ECO:0007669"/>
    <property type="project" value="UniProtKB-UniRule"/>
</dbReference>
<dbReference type="CDD" id="cd16962">
    <property type="entry name" value="RuvC"/>
    <property type="match status" value="1"/>
</dbReference>
<dbReference type="FunFam" id="3.30.420.10:FF:000002">
    <property type="entry name" value="Crossover junction endodeoxyribonuclease RuvC"/>
    <property type="match status" value="1"/>
</dbReference>
<dbReference type="Gene3D" id="3.30.420.10">
    <property type="entry name" value="Ribonuclease H-like superfamily/Ribonuclease H"/>
    <property type="match status" value="1"/>
</dbReference>
<dbReference type="HAMAP" id="MF_00034">
    <property type="entry name" value="RuvC"/>
    <property type="match status" value="1"/>
</dbReference>
<dbReference type="InterPro" id="IPR012337">
    <property type="entry name" value="RNaseH-like_sf"/>
</dbReference>
<dbReference type="InterPro" id="IPR036397">
    <property type="entry name" value="RNaseH_sf"/>
</dbReference>
<dbReference type="InterPro" id="IPR020563">
    <property type="entry name" value="X-over_junc_endoDNase_Mg_BS"/>
</dbReference>
<dbReference type="InterPro" id="IPR002176">
    <property type="entry name" value="X-over_junc_endoDNase_RuvC"/>
</dbReference>
<dbReference type="NCBIfam" id="TIGR00228">
    <property type="entry name" value="ruvC"/>
    <property type="match status" value="1"/>
</dbReference>
<dbReference type="PANTHER" id="PTHR30194">
    <property type="entry name" value="CROSSOVER JUNCTION ENDODEOXYRIBONUCLEASE RUVC"/>
    <property type="match status" value="1"/>
</dbReference>
<dbReference type="PANTHER" id="PTHR30194:SF3">
    <property type="entry name" value="CROSSOVER JUNCTION ENDODEOXYRIBONUCLEASE RUVC"/>
    <property type="match status" value="1"/>
</dbReference>
<dbReference type="Pfam" id="PF02075">
    <property type="entry name" value="RuvC"/>
    <property type="match status" value="1"/>
</dbReference>
<dbReference type="PRINTS" id="PR00696">
    <property type="entry name" value="RSOLVASERUVC"/>
</dbReference>
<dbReference type="SUPFAM" id="SSF53098">
    <property type="entry name" value="Ribonuclease H-like"/>
    <property type="match status" value="1"/>
</dbReference>
<dbReference type="PROSITE" id="PS01321">
    <property type="entry name" value="RUVC"/>
    <property type="match status" value="1"/>
</dbReference>
<sequence>MKILGIDPGTRNCGYAIVEKNGRDLKLIEAGLIKIKTKILQEQIVEMTEGLDLLFKNHKIDQVSIEDMFYAFNPKTVIKLAQFRGAISLKILQEFGNFSEYTPLQVKQAVTGNGKATKEQVAFMVKRLLNVKKEIKPLDITDAIAIALTHAQRL</sequence>
<proteinExistence type="inferred from homology"/>
<evidence type="ECO:0000255" key="1">
    <source>
        <dbReference type="HAMAP-Rule" id="MF_00034"/>
    </source>
</evidence>